<gene>
    <name evidence="1" type="primary">lpxK</name>
    <name type="ordered locus">Sfri_2387</name>
</gene>
<name>LPXK_SHEFN</name>
<evidence type="ECO:0000255" key="1">
    <source>
        <dbReference type="HAMAP-Rule" id="MF_00409"/>
    </source>
</evidence>
<organism>
    <name type="scientific">Shewanella frigidimarina (strain NCIMB 400)</name>
    <dbReference type="NCBI Taxonomy" id="318167"/>
    <lineage>
        <taxon>Bacteria</taxon>
        <taxon>Pseudomonadati</taxon>
        <taxon>Pseudomonadota</taxon>
        <taxon>Gammaproteobacteria</taxon>
        <taxon>Alteromonadales</taxon>
        <taxon>Shewanellaceae</taxon>
        <taxon>Shewanella</taxon>
    </lineage>
</organism>
<proteinExistence type="inferred from homology"/>
<comment type="function">
    <text evidence="1">Transfers the gamma-phosphate of ATP to the 4'-position of a tetraacyldisaccharide 1-phosphate intermediate (termed DS-1-P) to form tetraacyldisaccharide 1,4'-bis-phosphate (lipid IVA).</text>
</comment>
<comment type="catalytic activity">
    <reaction evidence="1">
        <text>a lipid A disaccharide + ATP = a lipid IVA + ADP + H(+)</text>
        <dbReference type="Rhea" id="RHEA:67840"/>
        <dbReference type="ChEBI" id="CHEBI:15378"/>
        <dbReference type="ChEBI" id="CHEBI:30616"/>
        <dbReference type="ChEBI" id="CHEBI:176343"/>
        <dbReference type="ChEBI" id="CHEBI:176425"/>
        <dbReference type="ChEBI" id="CHEBI:456216"/>
        <dbReference type="EC" id="2.7.1.130"/>
    </reaction>
</comment>
<comment type="pathway">
    <text evidence="1">Glycolipid biosynthesis; lipid IV(A) biosynthesis; lipid IV(A) from (3R)-3-hydroxytetradecanoyl-[acyl-carrier-protein] and UDP-N-acetyl-alpha-D-glucosamine: step 6/6.</text>
</comment>
<comment type="similarity">
    <text evidence="1">Belongs to the LpxK family.</text>
</comment>
<dbReference type="EC" id="2.7.1.130" evidence="1"/>
<dbReference type="EMBL" id="CP000447">
    <property type="protein sequence ID" value="ABI72232.1"/>
    <property type="molecule type" value="Genomic_DNA"/>
</dbReference>
<dbReference type="RefSeq" id="WP_011637841.1">
    <property type="nucleotide sequence ID" value="NC_008345.1"/>
</dbReference>
<dbReference type="SMR" id="Q080T3"/>
<dbReference type="STRING" id="318167.Sfri_2387"/>
<dbReference type="KEGG" id="sfr:Sfri_2387"/>
<dbReference type="eggNOG" id="COG1663">
    <property type="taxonomic scope" value="Bacteria"/>
</dbReference>
<dbReference type="HOGENOM" id="CLU_038816_2_0_6"/>
<dbReference type="OrthoDB" id="9766423at2"/>
<dbReference type="UniPathway" id="UPA00359">
    <property type="reaction ID" value="UER00482"/>
</dbReference>
<dbReference type="Proteomes" id="UP000000684">
    <property type="component" value="Chromosome"/>
</dbReference>
<dbReference type="GO" id="GO:0005886">
    <property type="term" value="C:plasma membrane"/>
    <property type="evidence" value="ECO:0007669"/>
    <property type="project" value="TreeGrafter"/>
</dbReference>
<dbReference type="GO" id="GO:0005524">
    <property type="term" value="F:ATP binding"/>
    <property type="evidence" value="ECO:0007669"/>
    <property type="project" value="UniProtKB-UniRule"/>
</dbReference>
<dbReference type="GO" id="GO:0009029">
    <property type="term" value="F:tetraacyldisaccharide 4'-kinase activity"/>
    <property type="evidence" value="ECO:0007669"/>
    <property type="project" value="UniProtKB-UniRule"/>
</dbReference>
<dbReference type="GO" id="GO:0009245">
    <property type="term" value="P:lipid A biosynthetic process"/>
    <property type="evidence" value="ECO:0007669"/>
    <property type="project" value="UniProtKB-UniRule"/>
</dbReference>
<dbReference type="GO" id="GO:0009244">
    <property type="term" value="P:lipopolysaccharide core region biosynthetic process"/>
    <property type="evidence" value="ECO:0007669"/>
    <property type="project" value="TreeGrafter"/>
</dbReference>
<dbReference type="HAMAP" id="MF_00409">
    <property type="entry name" value="LpxK"/>
    <property type="match status" value="1"/>
</dbReference>
<dbReference type="InterPro" id="IPR003758">
    <property type="entry name" value="LpxK"/>
</dbReference>
<dbReference type="InterPro" id="IPR027417">
    <property type="entry name" value="P-loop_NTPase"/>
</dbReference>
<dbReference type="NCBIfam" id="TIGR00682">
    <property type="entry name" value="lpxK"/>
    <property type="match status" value="1"/>
</dbReference>
<dbReference type="PANTHER" id="PTHR42724">
    <property type="entry name" value="TETRAACYLDISACCHARIDE 4'-KINASE"/>
    <property type="match status" value="1"/>
</dbReference>
<dbReference type="PANTHER" id="PTHR42724:SF1">
    <property type="entry name" value="TETRAACYLDISACCHARIDE 4'-KINASE, MITOCHONDRIAL-RELATED"/>
    <property type="match status" value="1"/>
</dbReference>
<dbReference type="Pfam" id="PF02606">
    <property type="entry name" value="LpxK"/>
    <property type="match status" value="1"/>
</dbReference>
<dbReference type="SUPFAM" id="SSF52540">
    <property type="entry name" value="P-loop containing nucleoside triphosphate hydrolases"/>
    <property type="match status" value="1"/>
</dbReference>
<sequence>MQQLIHRIWYQGHQAKWLLLPLSGIFWFISYIRRLLFSFGFKQAQVLPVPVIVVGNITAGGSGKTPTVIYLIELLRQHGYKPGVISRGYGVNVDGVVAVTPNAKASDVGDEPAMIVARTQVPMVVGAKRVSAAQTLLTDFDVDVIISDDGLQHYALGRDIEIALVDGERRYGNHCLLPAGPLREGLWRLNSVDFVINNGGPAQNGEVLMALEPAPLCLVDNNLQDKFNQQNSVVAMAGIGNPQRFFNSISQLGYKVVKTVEFADHQAFDQKQLSDLSVQHSLLMTEKDAVKCRDFAQSNWWYLPVNAKLNSEFDHALLSQLQQVAQTKKGLSHGI</sequence>
<reference key="1">
    <citation type="submission" date="2006-08" db="EMBL/GenBank/DDBJ databases">
        <title>Complete sequence of Shewanella frigidimarina NCIMB 400.</title>
        <authorList>
            <consortium name="US DOE Joint Genome Institute"/>
            <person name="Copeland A."/>
            <person name="Lucas S."/>
            <person name="Lapidus A."/>
            <person name="Barry K."/>
            <person name="Detter J.C."/>
            <person name="Glavina del Rio T."/>
            <person name="Hammon N."/>
            <person name="Israni S."/>
            <person name="Dalin E."/>
            <person name="Tice H."/>
            <person name="Pitluck S."/>
            <person name="Fredrickson J.K."/>
            <person name="Kolker E."/>
            <person name="McCuel L.A."/>
            <person name="DiChristina T."/>
            <person name="Nealson K.H."/>
            <person name="Newman D."/>
            <person name="Tiedje J.M."/>
            <person name="Zhou J."/>
            <person name="Romine M.F."/>
            <person name="Culley D.E."/>
            <person name="Serres M."/>
            <person name="Chertkov O."/>
            <person name="Brettin T."/>
            <person name="Bruce D."/>
            <person name="Han C."/>
            <person name="Tapia R."/>
            <person name="Gilna P."/>
            <person name="Schmutz J."/>
            <person name="Larimer F."/>
            <person name="Land M."/>
            <person name="Hauser L."/>
            <person name="Kyrpides N."/>
            <person name="Mikhailova N."/>
            <person name="Richardson P."/>
        </authorList>
    </citation>
    <scope>NUCLEOTIDE SEQUENCE [LARGE SCALE GENOMIC DNA]</scope>
    <source>
        <strain>NCIMB 400</strain>
    </source>
</reference>
<feature type="chain" id="PRO_0000291243" description="Tetraacyldisaccharide 4'-kinase">
    <location>
        <begin position="1"/>
        <end position="335"/>
    </location>
</feature>
<feature type="binding site" evidence="1">
    <location>
        <begin position="58"/>
        <end position="65"/>
    </location>
    <ligand>
        <name>ATP</name>
        <dbReference type="ChEBI" id="CHEBI:30616"/>
    </ligand>
</feature>
<keyword id="KW-0067">ATP-binding</keyword>
<keyword id="KW-0418">Kinase</keyword>
<keyword id="KW-0441">Lipid A biosynthesis</keyword>
<keyword id="KW-0444">Lipid biosynthesis</keyword>
<keyword id="KW-0443">Lipid metabolism</keyword>
<keyword id="KW-0547">Nucleotide-binding</keyword>
<keyword id="KW-1185">Reference proteome</keyword>
<keyword id="KW-0808">Transferase</keyword>
<accession>Q080T3</accession>
<protein>
    <recommendedName>
        <fullName evidence="1">Tetraacyldisaccharide 4'-kinase</fullName>
        <ecNumber evidence="1">2.7.1.130</ecNumber>
    </recommendedName>
    <alternativeName>
        <fullName evidence="1">Lipid A 4'-kinase</fullName>
    </alternativeName>
</protein>